<keyword id="KW-0058">Aromatic hydrocarbons catabolism</keyword>
<keyword id="KW-0456">Lyase</keyword>
<keyword id="KW-0464">Manganese</keyword>
<keyword id="KW-0479">Metal-binding</keyword>
<keyword id="KW-1185">Reference proteome</keyword>
<comment type="catalytic activity">
    <reaction evidence="1">
        <text>(S)-4-hydroxy-2-oxopentanoate = acetaldehyde + pyruvate</text>
        <dbReference type="Rhea" id="RHEA:22624"/>
        <dbReference type="ChEBI" id="CHEBI:15343"/>
        <dbReference type="ChEBI" id="CHEBI:15361"/>
        <dbReference type="ChEBI" id="CHEBI:73143"/>
        <dbReference type="EC" id="4.1.3.39"/>
    </reaction>
</comment>
<comment type="similarity">
    <text evidence="1">Belongs to the 4-hydroxy-2-oxovalerate aldolase family.</text>
</comment>
<dbReference type="EC" id="4.1.3.39" evidence="1"/>
<dbReference type="EMBL" id="CP000961">
    <property type="protein sequence ID" value="ACA85682.1"/>
    <property type="molecule type" value="Genomic_DNA"/>
</dbReference>
<dbReference type="RefSeq" id="WP_012324028.1">
    <property type="nucleotide sequence ID" value="NC_010506.1"/>
</dbReference>
<dbReference type="SMR" id="B1KJK9"/>
<dbReference type="STRING" id="392500.Swoo_1390"/>
<dbReference type="KEGG" id="swd:Swoo_1390"/>
<dbReference type="eggNOG" id="COG0119">
    <property type="taxonomic scope" value="Bacteria"/>
</dbReference>
<dbReference type="HOGENOM" id="CLU_049173_0_0_6"/>
<dbReference type="Proteomes" id="UP000002168">
    <property type="component" value="Chromosome"/>
</dbReference>
<dbReference type="GO" id="GO:0003852">
    <property type="term" value="F:2-isopropylmalate synthase activity"/>
    <property type="evidence" value="ECO:0007669"/>
    <property type="project" value="TreeGrafter"/>
</dbReference>
<dbReference type="GO" id="GO:0008701">
    <property type="term" value="F:4-hydroxy-2-oxovalerate aldolase activity"/>
    <property type="evidence" value="ECO:0007669"/>
    <property type="project" value="UniProtKB-UniRule"/>
</dbReference>
<dbReference type="GO" id="GO:0030145">
    <property type="term" value="F:manganese ion binding"/>
    <property type="evidence" value="ECO:0007669"/>
    <property type="project" value="UniProtKB-UniRule"/>
</dbReference>
<dbReference type="GO" id="GO:0009056">
    <property type="term" value="P:catabolic process"/>
    <property type="evidence" value="ECO:0007669"/>
    <property type="project" value="UniProtKB-KW"/>
</dbReference>
<dbReference type="GO" id="GO:0009098">
    <property type="term" value="P:L-leucine biosynthetic process"/>
    <property type="evidence" value="ECO:0007669"/>
    <property type="project" value="TreeGrafter"/>
</dbReference>
<dbReference type="CDD" id="cd07943">
    <property type="entry name" value="DRE_TIM_HOA"/>
    <property type="match status" value="1"/>
</dbReference>
<dbReference type="Gene3D" id="1.10.8.60">
    <property type="match status" value="1"/>
</dbReference>
<dbReference type="Gene3D" id="3.20.20.70">
    <property type="entry name" value="Aldolase class I"/>
    <property type="match status" value="1"/>
</dbReference>
<dbReference type="HAMAP" id="MF_01656">
    <property type="entry name" value="HOA"/>
    <property type="match status" value="1"/>
</dbReference>
<dbReference type="InterPro" id="IPR050073">
    <property type="entry name" value="2-IPM_HCS-like"/>
</dbReference>
<dbReference type="InterPro" id="IPR017629">
    <property type="entry name" value="4OH_2_O-val_aldolase"/>
</dbReference>
<dbReference type="InterPro" id="IPR013785">
    <property type="entry name" value="Aldolase_TIM"/>
</dbReference>
<dbReference type="InterPro" id="IPR012425">
    <property type="entry name" value="DmpG_comm"/>
</dbReference>
<dbReference type="InterPro" id="IPR035685">
    <property type="entry name" value="DRE_TIM_HOA"/>
</dbReference>
<dbReference type="InterPro" id="IPR000891">
    <property type="entry name" value="PYR_CT"/>
</dbReference>
<dbReference type="NCBIfam" id="TIGR03217">
    <property type="entry name" value="4OH_2_O_val_ald"/>
    <property type="match status" value="1"/>
</dbReference>
<dbReference type="NCBIfam" id="NF006049">
    <property type="entry name" value="PRK08195.1"/>
    <property type="match status" value="1"/>
</dbReference>
<dbReference type="PANTHER" id="PTHR10277:SF9">
    <property type="entry name" value="2-ISOPROPYLMALATE SYNTHASE 1, CHLOROPLASTIC-RELATED"/>
    <property type="match status" value="1"/>
</dbReference>
<dbReference type="PANTHER" id="PTHR10277">
    <property type="entry name" value="HOMOCITRATE SYNTHASE-RELATED"/>
    <property type="match status" value="1"/>
</dbReference>
<dbReference type="Pfam" id="PF07836">
    <property type="entry name" value="DmpG_comm"/>
    <property type="match status" value="1"/>
</dbReference>
<dbReference type="Pfam" id="PF00682">
    <property type="entry name" value="HMGL-like"/>
    <property type="match status" value="1"/>
</dbReference>
<dbReference type="SUPFAM" id="SSF51569">
    <property type="entry name" value="Aldolase"/>
    <property type="match status" value="1"/>
</dbReference>
<dbReference type="SUPFAM" id="SSF89000">
    <property type="entry name" value="post-HMGL domain-like"/>
    <property type="match status" value="1"/>
</dbReference>
<dbReference type="PROSITE" id="PS50991">
    <property type="entry name" value="PYR_CT"/>
    <property type="match status" value="1"/>
</dbReference>
<feature type="chain" id="PRO_0000387917" description="4-hydroxy-2-oxovalerate aldolase">
    <location>
        <begin position="1"/>
        <end position="339"/>
    </location>
</feature>
<feature type="domain" description="Pyruvate carboxyltransferase" evidence="1">
    <location>
        <begin position="8"/>
        <end position="260"/>
    </location>
</feature>
<feature type="active site" description="Proton acceptor" evidence="1">
    <location>
        <position position="20"/>
    </location>
</feature>
<feature type="binding site" evidence="1">
    <location>
        <begin position="16"/>
        <end position="17"/>
    </location>
    <ligand>
        <name>substrate</name>
    </ligand>
</feature>
<feature type="binding site" evidence="1">
    <location>
        <position position="17"/>
    </location>
    <ligand>
        <name>Mn(2+)</name>
        <dbReference type="ChEBI" id="CHEBI:29035"/>
    </ligand>
</feature>
<feature type="binding site" evidence="1">
    <location>
        <position position="170"/>
    </location>
    <ligand>
        <name>substrate</name>
    </ligand>
</feature>
<feature type="binding site" evidence="1">
    <location>
        <position position="199"/>
    </location>
    <ligand>
        <name>Mn(2+)</name>
        <dbReference type="ChEBI" id="CHEBI:29035"/>
    </ligand>
</feature>
<feature type="binding site" evidence="1">
    <location>
        <position position="199"/>
    </location>
    <ligand>
        <name>substrate</name>
    </ligand>
</feature>
<feature type="binding site" evidence="1">
    <location>
        <position position="201"/>
    </location>
    <ligand>
        <name>Mn(2+)</name>
        <dbReference type="ChEBI" id="CHEBI:29035"/>
    </ligand>
</feature>
<feature type="binding site" evidence="1">
    <location>
        <position position="290"/>
    </location>
    <ligand>
        <name>substrate</name>
    </ligand>
</feature>
<feature type="site" description="Transition state stabilizer" evidence="1">
    <location>
        <position position="16"/>
    </location>
</feature>
<proteinExistence type="inferred from homology"/>
<reference key="1">
    <citation type="submission" date="2008-02" db="EMBL/GenBank/DDBJ databases">
        <title>Complete sequence of Shewanella woodyi ATCC 51908.</title>
        <authorList>
            <consortium name="US DOE Joint Genome Institute"/>
            <person name="Copeland A."/>
            <person name="Lucas S."/>
            <person name="Lapidus A."/>
            <person name="Glavina del Rio T."/>
            <person name="Dalin E."/>
            <person name="Tice H."/>
            <person name="Bruce D."/>
            <person name="Goodwin L."/>
            <person name="Pitluck S."/>
            <person name="Sims D."/>
            <person name="Brettin T."/>
            <person name="Detter J.C."/>
            <person name="Han C."/>
            <person name="Kuske C.R."/>
            <person name="Schmutz J."/>
            <person name="Larimer F."/>
            <person name="Land M."/>
            <person name="Hauser L."/>
            <person name="Kyrpides N."/>
            <person name="Lykidis A."/>
            <person name="Zhao J.-S."/>
            <person name="Richardson P."/>
        </authorList>
    </citation>
    <scope>NUCLEOTIDE SEQUENCE [LARGE SCALE GENOMIC DNA]</scope>
    <source>
        <strain>ATCC 51908 / MS32</strain>
    </source>
</reference>
<protein>
    <recommendedName>
        <fullName evidence="1">4-hydroxy-2-oxovalerate aldolase</fullName>
        <shortName evidence="1">HOA</shortName>
        <ecNumber evidence="1">4.1.3.39</ecNumber>
    </recommendedName>
    <alternativeName>
        <fullName evidence="1">4-hydroxy-2-keto-pentanoic acid aldolase</fullName>
    </alternativeName>
    <alternativeName>
        <fullName evidence="1">4-hydroxy-2-oxopentanoate aldolase</fullName>
    </alternativeName>
</protein>
<organism>
    <name type="scientific">Shewanella woodyi (strain ATCC 51908 / MS32)</name>
    <dbReference type="NCBI Taxonomy" id="392500"/>
    <lineage>
        <taxon>Bacteria</taxon>
        <taxon>Pseudomonadati</taxon>
        <taxon>Pseudomonadota</taxon>
        <taxon>Gammaproteobacteria</taxon>
        <taxon>Alteromonadales</taxon>
        <taxon>Shewanellaceae</taxon>
        <taxon>Shewanella</taxon>
    </lineage>
</organism>
<gene>
    <name type="ordered locus">Swoo_1390</name>
</gene>
<evidence type="ECO:0000255" key="1">
    <source>
        <dbReference type="HAMAP-Rule" id="MF_01656"/>
    </source>
</evidence>
<accession>B1KJK9</accession>
<name>HOA_SHEWM</name>
<sequence length="339" mass="36258">MNISNKKIILHDMCLRDGMHAKRHQISLAEMTQLATALDDAGVPLIEVTHGDGLGGNSVNYGFAAHSDEEYLSTVIPLMKQAKISALLLPGIGTVDHLRMAHELGVSTIRVAAQCTEADVTEQHISLSRQLGLDTVGFLMMAHMLEPKALLEQAKLMESYGANCIYCTDSAGYMLQDDVFERISVLRDGLKPDTQIGFHGHHNLALGVANSLTAVEAGAERIDGSAAGLGAGAGNTPLEVFNAVATRMGASTDVDVFKLMAAAEEIVVPMMDQAIRVDRDSLVLGYAGVYSSFLLHAKRAAEKYGVPSEAILLKLGQMKTVGGQEDMIEDVAINLAKSR</sequence>